<evidence type="ECO:0000255" key="1"/>
<evidence type="ECO:0000305" key="2"/>
<sequence>MSKGIKMHNSVMRLTIPNKKIINYAPHIVTSIILFFICQQLAQLTWKIILPVNFTDNALSSADMTSPAAPSAETALPRFTLFGLAEKTSASAPGGNLDQAPVSALRLRVTGLLASTDPSRAIAIMMKGNQQVSLGIGDNTPGGEAKIIAISPDRLIVNYRGRNEAIPLFNDPPAVGKNSAAPPARHLAQELRAQPQNILHYLNISPVMVNDKLSGYRLNPGKDPALFRQSGLRENDLAIALNGLDLRDKEQARQVLAQLPELTEITLTVERDGQKNDIYLALRDE</sequence>
<gene>
    <name type="primary">pulC</name>
    <name type="synonym">malX</name>
</gene>
<organism>
    <name type="scientific">Klebsiella pneumoniae</name>
    <dbReference type="NCBI Taxonomy" id="573"/>
    <lineage>
        <taxon>Bacteria</taxon>
        <taxon>Pseudomonadati</taxon>
        <taxon>Pseudomonadota</taxon>
        <taxon>Gammaproteobacteria</taxon>
        <taxon>Enterobacterales</taxon>
        <taxon>Enterobacteriaceae</taxon>
        <taxon>Klebsiella/Raoultella group</taxon>
        <taxon>Klebsiella</taxon>
        <taxon>Klebsiella pneumoniae complex</taxon>
    </lineage>
</organism>
<protein>
    <recommendedName>
        <fullName>Type II secretion system protein C</fullName>
        <shortName>T2SS protein C</shortName>
    </recommendedName>
    <alternativeName>
        <fullName>General secretion pathway protein C</fullName>
    </alternativeName>
    <alternativeName>
        <fullName>Pullulanase secretion envelope PulC</fullName>
    </alternativeName>
</protein>
<name>GSPC_KLEPN</name>
<feature type="chain" id="PRO_0000215004" description="Type II secretion system protein C">
    <location>
        <begin position="1"/>
        <end position="285"/>
    </location>
</feature>
<feature type="topological domain" description="Cytoplasmic" evidence="1">
    <location>
        <begin position="1"/>
        <end position="27"/>
    </location>
</feature>
<feature type="transmembrane region" description="Helical" evidence="1">
    <location>
        <begin position="28"/>
        <end position="46"/>
    </location>
</feature>
<feature type="topological domain" description="Periplasmic" evidence="1">
    <location>
        <begin position="47"/>
        <end position="285"/>
    </location>
</feature>
<reference key="1">
    <citation type="journal article" date="1989" name="J. Biol. Chem.">
        <title>Protein secretion by Gram-negative bacteria. Characterization of two membrane proteins required for pullulanase secretion by Escherichia coli K-12.</title>
        <authorList>
            <person name="D'Enfert C."/>
            <person name="Reyss I."/>
            <person name="Wandersman C."/>
            <person name="Pugsley A.P."/>
        </authorList>
    </citation>
    <scope>NUCLEOTIDE SEQUENCE [GENOMIC DNA]</scope>
</reference>
<keyword id="KW-0997">Cell inner membrane</keyword>
<keyword id="KW-1003">Cell membrane</keyword>
<keyword id="KW-0472">Membrane</keyword>
<keyword id="KW-0653">Protein transport</keyword>
<keyword id="KW-0812">Transmembrane</keyword>
<keyword id="KW-1133">Transmembrane helix</keyword>
<keyword id="KW-0813">Transport</keyword>
<dbReference type="EMBL" id="M32613">
    <property type="protein sequence ID" value="AAA25125.1"/>
    <property type="molecule type" value="Genomic_DNA"/>
</dbReference>
<dbReference type="PIR" id="A34469">
    <property type="entry name" value="A34469"/>
</dbReference>
<dbReference type="SMR" id="P15643"/>
<dbReference type="TCDB" id="3.A.15.1.1">
    <property type="family name" value="the outer membrane protein secreting main terminal branch (mtb) family"/>
</dbReference>
<dbReference type="GO" id="GO:0005886">
    <property type="term" value="C:plasma membrane"/>
    <property type="evidence" value="ECO:0007669"/>
    <property type="project" value="UniProtKB-SubCell"/>
</dbReference>
<dbReference type="GO" id="GO:0015627">
    <property type="term" value="C:type II protein secretion system complex"/>
    <property type="evidence" value="ECO:0007669"/>
    <property type="project" value="InterPro"/>
</dbReference>
<dbReference type="GO" id="GO:0015628">
    <property type="term" value="P:protein secretion by the type II secretion system"/>
    <property type="evidence" value="ECO:0007669"/>
    <property type="project" value="InterPro"/>
</dbReference>
<dbReference type="Gene3D" id="2.30.30.830">
    <property type="match status" value="1"/>
</dbReference>
<dbReference type="Gene3D" id="2.30.42.10">
    <property type="match status" value="1"/>
</dbReference>
<dbReference type="InterPro" id="IPR036034">
    <property type="entry name" value="PDZ_sf"/>
</dbReference>
<dbReference type="InterPro" id="IPR024961">
    <property type="entry name" value="T2SS_GspC_N"/>
</dbReference>
<dbReference type="InterPro" id="IPR001639">
    <property type="entry name" value="T2SS_protein-GspC"/>
</dbReference>
<dbReference type="NCBIfam" id="TIGR01713">
    <property type="entry name" value="typeII_sec_gspC"/>
    <property type="match status" value="1"/>
</dbReference>
<dbReference type="Pfam" id="PF11356">
    <property type="entry name" value="T2SSC"/>
    <property type="match status" value="1"/>
</dbReference>
<dbReference type="SUPFAM" id="SSF50156">
    <property type="entry name" value="PDZ domain-like"/>
    <property type="match status" value="1"/>
</dbReference>
<dbReference type="PROSITE" id="PS01141">
    <property type="entry name" value="T2SP_C"/>
    <property type="match status" value="1"/>
</dbReference>
<proteinExistence type="inferred from homology"/>
<accession>P15643</accession>
<comment type="function">
    <text>Involved in a type II secretion system (T2SS, formerly general secretion pathway, GSP) for the export of proteins. Required for the translocation of pullulanase.</text>
</comment>
<comment type="subcellular location">
    <subcellularLocation>
        <location>Cell inner membrane</location>
        <topology>Single-pass membrane protein</topology>
    </subcellularLocation>
</comment>
<comment type="similarity">
    <text evidence="2">Belongs to the GSP C family.</text>
</comment>